<accession>Q7G9E7</accession>
<accession>F4ICZ0</accession>
<reference key="1">
    <citation type="journal article" date="2000" name="Nature">
        <title>Sequence and analysis of chromosome 1 of the plant Arabidopsis thaliana.</title>
        <authorList>
            <person name="Theologis A."/>
            <person name="Ecker J.R."/>
            <person name="Palm C.J."/>
            <person name="Federspiel N.A."/>
            <person name="Kaul S."/>
            <person name="White O."/>
            <person name="Alonso J."/>
            <person name="Altafi H."/>
            <person name="Araujo R."/>
            <person name="Bowman C.L."/>
            <person name="Brooks S.Y."/>
            <person name="Buehler E."/>
            <person name="Chan A."/>
            <person name="Chao Q."/>
            <person name="Chen H."/>
            <person name="Cheuk R.F."/>
            <person name="Chin C.W."/>
            <person name="Chung M.K."/>
            <person name="Conn L."/>
            <person name="Conway A.B."/>
            <person name="Conway A.R."/>
            <person name="Creasy T.H."/>
            <person name="Dewar K."/>
            <person name="Dunn P."/>
            <person name="Etgu P."/>
            <person name="Feldblyum T.V."/>
            <person name="Feng J.-D."/>
            <person name="Fong B."/>
            <person name="Fujii C.Y."/>
            <person name="Gill J.E."/>
            <person name="Goldsmith A.D."/>
            <person name="Haas B."/>
            <person name="Hansen N.F."/>
            <person name="Hughes B."/>
            <person name="Huizar L."/>
            <person name="Hunter J.L."/>
            <person name="Jenkins J."/>
            <person name="Johnson-Hopson C."/>
            <person name="Khan S."/>
            <person name="Khaykin E."/>
            <person name="Kim C.J."/>
            <person name="Koo H.L."/>
            <person name="Kremenetskaia I."/>
            <person name="Kurtz D.B."/>
            <person name="Kwan A."/>
            <person name="Lam B."/>
            <person name="Langin-Hooper S."/>
            <person name="Lee A."/>
            <person name="Lee J.M."/>
            <person name="Lenz C.A."/>
            <person name="Li J.H."/>
            <person name="Li Y.-P."/>
            <person name="Lin X."/>
            <person name="Liu S.X."/>
            <person name="Liu Z.A."/>
            <person name="Luros J.S."/>
            <person name="Maiti R."/>
            <person name="Marziali A."/>
            <person name="Militscher J."/>
            <person name="Miranda M."/>
            <person name="Nguyen M."/>
            <person name="Nierman W.C."/>
            <person name="Osborne B.I."/>
            <person name="Pai G."/>
            <person name="Peterson J."/>
            <person name="Pham P.K."/>
            <person name="Rizzo M."/>
            <person name="Rooney T."/>
            <person name="Rowley D."/>
            <person name="Sakano H."/>
            <person name="Salzberg S.L."/>
            <person name="Schwartz J.R."/>
            <person name="Shinn P."/>
            <person name="Southwick A.M."/>
            <person name="Sun H."/>
            <person name="Tallon L.J."/>
            <person name="Tambunga G."/>
            <person name="Toriumi M.J."/>
            <person name="Town C.D."/>
            <person name="Utterback T."/>
            <person name="Van Aken S."/>
            <person name="Vaysberg M."/>
            <person name="Vysotskaia V.S."/>
            <person name="Walker M."/>
            <person name="Wu D."/>
            <person name="Yu G."/>
            <person name="Fraser C.M."/>
            <person name="Venter J.C."/>
            <person name="Davis R.W."/>
        </authorList>
    </citation>
    <scope>NUCLEOTIDE SEQUENCE [LARGE SCALE GENOMIC DNA]</scope>
    <source>
        <strain>cv. Columbia</strain>
    </source>
</reference>
<reference key="2">
    <citation type="journal article" date="2017" name="Plant J.">
        <title>Araport11: a complete reannotation of the Arabidopsis thaliana reference genome.</title>
        <authorList>
            <person name="Cheng C.Y."/>
            <person name="Krishnakumar V."/>
            <person name="Chan A.P."/>
            <person name="Thibaud-Nissen F."/>
            <person name="Schobel S."/>
            <person name="Town C.D."/>
        </authorList>
    </citation>
    <scope>GENOME REANNOTATION</scope>
    <source>
        <strain>cv. Columbia</strain>
    </source>
</reference>
<keyword id="KW-1185">Reference proteome</keyword>
<sequence length="211" mass="24350">MRKGNEEKNYREEEYLQLPLDLIVEILKKLPLKSLVRFRCVSKQFSTIICSLRDFIESVVTRHLAQPGQQLPLLAVFHHCVPETFFTVSSSFSQSLKPAIYNPTTKRSVGLPEIGPPVTGFRKCNCLFGYDPVMDQYKVLSMVFDFRELTQTFHVFTLGQSQSWRRIQGINDGKLFPSAVGICIDGTFEFLRFKRDQDCLFCDNETQHIII</sequence>
<protein>
    <recommendedName>
        <fullName>Putative F-box protein At1g52490</fullName>
    </recommendedName>
</protein>
<comment type="sequence caution" evidence="2">
    <conflict type="erroneous gene model prediction">
        <sequence resource="EMBL-CDS" id="AAD55614"/>
    </conflict>
</comment>
<organism>
    <name type="scientific">Arabidopsis thaliana</name>
    <name type="common">Mouse-ear cress</name>
    <dbReference type="NCBI Taxonomy" id="3702"/>
    <lineage>
        <taxon>Eukaryota</taxon>
        <taxon>Viridiplantae</taxon>
        <taxon>Streptophyta</taxon>
        <taxon>Embryophyta</taxon>
        <taxon>Tracheophyta</taxon>
        <taxon>Spermatophyta</taxon>
        <taxon>Magnoliopsida</taxon>
        <taxon>eudicotyledons</taxon>
        <taxon>Gunneridae</taxon>
        <taxon>Pentapetalae</taxon>
        <taxon>rosids</taxon>
        <taxon>malvids</taxon>
        <taxon>Brassicales</taxon>
        <taxon>Brassicaceae</taxon>
        <taxon>Camelineae</taxon>
        <taxon>Arabidopsis</taxon>
    </lineage>
</organism>
<gene>
    <name type="ordered locus">At1g52490</name>
    <name type="ORF">F6D8.30</name>
</gene>
<evidence type="ECO:0000255" key="1">
    <source>
        <dbReference type="PROSITE-ProRule" id="PRU00080"/>
    </source>
</evidence>
<evidence type="ECO:0000305" key="2"/>
<feature type="chain" id="PRO_0000283328" description="Putative F-box protein At1g52490">
    <location>
        <begin position="1"/>
        <end position="211"/>
    </location>
</feature>
<feature type="domain" description="F-box" evidence="1">
    <location>
        <begin position="12"/>
        <end position="59"/>
    </location>
</feature>
<dbReference type="EMBL" id="AC008016">
    <property type="protein sequence ID" value="AAD55614.1"/>
    <property type="status" value="ALT_SEQ"/>
    <property type="molecule type" value="Genomic_DNA"/>
</dbReference>
<dbReference type="EMBL" id="CP002684">
    <property type="protein sequence ID" value="AEE32813.2"/>
    <property type="molecule type" value="Genomic_DNA"/>
</dbReference>
<dbReference type="PIR" id="C96565">
    <property type="entry name" value="C96565"/>
</dbReference>
<dbReference type="RefSeq" id="NP_175658.5">
    <property type="nucleotide sequence ID" value="NM_104127.5"/>
</dbReference>
<dbReference type="SMR" id="Q7G9E7"/>
<dbReference type="FunCoup" id="Q7G9E7">
    <property type="interactions" value="49"/>
</dbReference>
<dbReference type="EnsemblPlants" id="AT1G52490.1">
    <property type="protein sequence ID" value="AT1G52490.1"/>
    <property type="gene ID" value="AT1G52490"/>
</dbReference>
<dbReference type="GeneID" id="841680"/>
<dbReference type="Gramene" id="AT1G52490.1">
    <property type="protein sequence ID" value="AT1G52490.1"/>
    <property type="gene ID" value="AT1G52490"/>
</dbReference>
<dbReference type="KEGG" id="ath:AT1G52490"/>
<dbReference type="Araport" id="AT1G52490"/>
<dbReference type="TAIR" id="AT1G52490"/>
<dbReference type="HOGENOM" id="CLU_531403_0_0_1"/>
<dbReference type="InParanoid" id="Q7G9E7"/>
<dbReference type="PRO" id="PR:Q7G9E7"/>
<dbReference type="Proteomes" id="UP000006548">
    <property type="component" value="Chromosome 1"/>
</dbReference>
<dbReference type="ExpressionAtlas" id="Q7G9E7">
    <property type="expression patterns" value="baseline"/>
</dbReference>
<dbReference type="Gene3D" id="1.20.1280.50">
    <property type="match status" value="1"/>
</dbReference>
<dbReference type="InterPro" id="IPR017451">
    <property type="entry name" value="F-box-assoc_interact_dom"/>
</dbReference>
<dbReference type="InterPro" id="IPR036047">
    <property type="entry name" value="F-box-like_dom_sf"/>
</dbReference>
<dbReference type="InterPro" id="IPR001810">
    <property type="entry name" value="F-box_dom"/>
</dbReference>
<dbReference type="NCBIfam" id="TIGR01640">
    <property type="entry name" value="F_box_assoc_1"/>
    <property type="match status" value="1"/>
</dbReference>
<dbReference type="PANTHER" id="PTHR31111">
    <property type="entry name" value="BNAA05G37150D PROTEIN-RELATED"/>
    <property type="match status" value="1"/>
</dbReference>
<dbReference type="PANTHER" id="PTHR31111:SF138">
    <property type="entry name" value="F-BOX ASSOCIATED DOMAIN-CONTAINING PROTEIN"/>
    <property type="match status" value="1"/>
</dbReference>
<dbReference type="Pfam" id="PF00646">
    <property type="entry name" value="F-box"/>
    <property type="match status" value="1"/>
</dbReference>
<dbReference type="SMART" id="SM00256">
    <property type="entry name" value="FBOX"/>
    <property type="match status" value="1"/>
</dbReference>
<dbReference type="SUPFAM" id="SSF81383">
    <property type="entry name" value="F-box domain"/>
    <property type="match status" value="1"/>
</dbReference>
<dbReference type="PROSITE" id="PS50181">
    <property type="entry name" value="FBOX"/>
    <property type="match status" value="1"/>
</dbReference>
<name>FB54_ARATH</name>
<proteinExistence type="predicted"/>